<gene>
    <name evidence="1" type="primary">frr</name>
    <name type="ordered locus">Deide_13210</name>
</gene>
<organism>
    <name type="scientific">Deinococcus deserti (strain DSM 17065 / CIP 109153 / LMG 22923 / VCD115)</name>
    <dbReference type="NCBI Taxonomy" id="546414"/>
    <lineage>
        <taxon>Bacteria</taxon>
        <taxon>Thermotogati</taxon>
        <taxon>Deinococcota</taxon>
        <taxon>Deinococci</taxon>
        <taxon>Deinococcales</taxon>
        <taxon>Deinococcaceae</taxon>
        <taxon>Deinococcus</taxon>
    </lineage>
</organism>
<reference key="1">
    <citation type="journal article" date="2009" name="PLoS Genet.">
        <title>Alliance of proteomics and genomics to unravel the specificities of Sahara bacterium Deinococcus deserti.</title>
        <authorList>
            <person name="de Groot A."/>
            <person name="Dulermo R."/>
            <person name="Ortet P."/>
            <person name="Blanchard L."/>
            <person name="Guerin P."/>
            <person name="Fernandez B."/>
            <person name="Vacherie B."/>
            <person name="Dossat C."/>
            <person name="Jolivet E."/>
            <person name="Siguier P."/>
            <person name="Chandler M."/>
            <person name="Barakat M."/>
            <person name="Dedieu A."/>
            <person name="Barbe V."/>
            <person name="Heulin T."/>
            <person name="Sommer S."/>
            <person name="Achouak W."/>
            <person name="Armengaud J."/>
        </authorList>
    </citation>
    <scope>NUCLEOTIDE SEQUENCE [LARGE SCALE GENOMIC DNA]</scope>
    <source>
        <strain>DSM 17065 / CIP 109153 / LMG 22923 / VCD115</strain>
    </source>
</reference>
<protein>
    <recommendedName>
        <fullName evidence="1">Ribosome-recycling factor</fullName>
        <shortName evidence="1">RRF</shortName>
    </recommendedName>
    <alternativeName>
        <fullName evidence="1">Ribosome-releasing factor</fullName>
    </alternativeName>
</protein>
<dbReference type="EMBL" id="CP001114">
    <property type="protein sequence ID" value="ACO46258.1"/>
    <property type="molecule type" value="Genomic_DNA"/>
</dbReference>
<dbReference type="RefSeq" id="WP_012693381.1">
    <property type="nucleotide sequence ID" value="NC_012526.1"/>
</dbReference>
<dbReference type="SMR" id="C1CVP1"/>
<dbReference type="STRING" id="546414.Deide_13210"/>
<dbReference type="PaxDb" id="546414-Deide_13210"/>
<dbReference type="KEGG" id="ddr:Deide_13210"/>
<dbReference type="eggNOG" id="COG0233">
    <property type="taxonomic scope" value="Bacteria"/>
</dbReference>
<dbReference type="HOGENOM" id="CLU_073981_2_0_0"/>
<dbReference type="OrthoDB" id="9804006at2"/>
<dbReference type="Proteomes" id="UP000002208">
    <property type="component" value="Chromosome"/>
</dbReference>
<dbReference type="GO" id="GO:0005737">
    <property type="term" value="C:cytoplasm"/>
    <property type="evidence" value="ECO:0007669"/>
    <property type="project" value="UniProtKB-SubCell"/>
</dbReference>
<dbReference type="GO" id="GO:0043023">
    <property type="term" value="F:ribosomal large subunit binding"/>
    <property type="evidence" value="ECO:0007669"/>
    <property type="project" value="TreeGrafter"/>
</dbReference>
<dbReference type="GO" id="GO:0006415">
    <property type="term" value="P:translational termination"/>
    <property type="evidence" value="ECO:0007669"/>
    <property type="project" value="UniProtKB-UniRule"/>
</dbReference>
<dbReference type="CDD" id="cd00520">
    <property type="entry name" value="RRF"/>
    <property type="match status" value="1"/>
</dbReference>
<dbReference type="FunFam" id="1.10.132.20:FF:000001">
    <property type="entry name" value="Ribosome-recycling factor"/>
    <property type="match status" value="1"/>
</dbReference>
<dbReference type="FunFam" id="3.30.1360.40:FF:000001">
    <property type="entry name" value="Ribosome-recycling factor"/>
    <property type="match status" value="1"/>
</dbReference>
<dbReference type="Gene3D" id="3.30.1360.40">
    <property type="match status" value="1"/>
</dbReference>
<dbReference type="Gene3D" id="1.10.132.20">
    <property type="entry name" value="Ribosome-recycling factor"/>
    <property type="match status" value="1"/>
</dbReference>
<dbReference type="HAMAP" id="MF_00040">
    <property type="entry name" value="RRF"/>
    <property type="match status" value="1"/>
</dbReference>
<dbReference type="InterPro" id="IPR002661">
    <property type="entry name" value="Ribosome_recyc_fac"/>
</dbReference>
<dbReference type="InterPro" id="IPR023584">
    <property type="entry name" value="Ribosome_recyc_fac_dom"/>
</dbReference>
<dbReference type="InterPro" id="IPR036191">
    <property type="entry name" value="RRF_sf"/>
</dbReference>
<dbReference type="NCBIfam" id="TIGR00496">
    <property type="entry name" value="frr"/>
    <property type="match status" value="1"/>
</dbReference>
<dbReference type="PANTHER" id="PTHR20982:SF3">
    <property type="entry name" value="MITOCHONDRIAL RIBOSOME RECYCLING FACTOR PSEUDO 1"/>
    <property type="match status" value="1"/>
</dbReference>
<dbReference type="PANTHER" id="PTHR20982">
    <property type="entry name" value="RIBOSOME RECYCLING FACTOR"/>
    <property type="match status" value="1"/>
</dbReference>
<dbReference type="Pfam" id="PF01765">
    <property type="entry name" value="RRF"/>
    <property type="match status" value="1"/>
</dbReference>
<dbReference type="SUPFAM" id="SSF55194">
    <property type="entry name" value="Ribosome recycling factor, RRF"/>
    <property type="match status" value="1"/>
</dbReference>
<comment type="function">
    <text evidence="1">Responsible for the release of ribosomes from messenger RNA at the termination of protein biosynthesis. May increase the efficiency of translation by recycling ribosomes from one round of translation to another.</text>
</comment>
<comment type="subcellular location">
    <subcellularLocation>
        <location evidence="1">Cytoplasm</location>
    </subcellularLocation>
</comment>
<comment type="similarity">
    <text evidence="1">Belongs to the RRF family.</text>
</comment>
<evidence type="ECO:0000255" key="1">
    <source>
        <dbReference type="HAMAP-Rule" id="MF_00040"/>
    </source>
</evidence>
<keyword id="KW-0963">Cytoplasm</keyword>
<keyword id="KW-0648">Protein biosynthesis</keyword>
<keyword id="KW-1185">Reference proteome</keyword>
<name>RRF_DEIDV</name>
<accession>C1CVP1</accession>
<proteinExistence type="inferred from homology"/>
<feature type="chain" id="PRO_1000202093" description="Ribosome-recycling factor">
    <location>
        <begin position="1"/>
        <end position="183"/>
    </location>
</feature>
<sequence length="183" mass="20371">MADMKSIQADARERMGKAIEALESNLSVLRTGRANPGILKKVIVDYYGSTMPIDQVASITTPDARTLVITPWDRGALGPIEKAIRDSDLGLNPNNKGDTIFISLPMLTEERRKDLVKNAKNYAEDARIAVRNIRKHALDEVKKVEGVGDDEIKRGEAEVQKITDEFIARVDSTFHKKEQEILG</sequence>